<feature type="chain" id="PRO_0000210504" description="Uncharacterized protein MG279">
    <location>
        <begin position="1"/>
        <end position="218"/>
    </location>
</feature>
<feature type="transmembrane region" description="Helical" evidence="1">
    <location>
        <begin position="8"/>
        <end position="28"/>
    </location>
</feature>
<feature type="transmembrane region" description="Helical" evidence="1">
    <location>
        <begin position="158"/>
        <end position="178"/>
    </location>
</feature>
<comment type="subcellular location">
    <subcellularLocation>
        <location evidence="2">Cell membrane</location>
        <topology evidence="2">Multi-pass membrane protein</topology>
    </subcellularLocation>
</comment>
<proteinExistence type="predicted"/>
<name>Y279_MYCGE</name>
<accession>P47521</accession>
<dbReference type="EMBL" id="L43967">
    <property type="protein sequence ID" value="AAC71501.1"/>
    <property type="molecule type" value="Genomic_DNA"/>
</dbReference>
<dbReference type="PIR" id="H64230">
    <property type="entry name" value="H64230"/>
</dbReference>
<dbReference type="RefSeq" id="WP_010869404.1">
    <property type="nucleotide sequence ID" value="NC_000908.2"/>
</dbReference>
<dbReference type="SMR" id="P47521"/>
<dbReference type="STRING" id="243273.MG_279"/>
<dbReference type="GeneID" id="88282435"/>
<dbReference type="KEGG" id="mge:MG_279"/>
<dbReference type="eggNOG" id="ENOG5032F2F">
    <property type="taxonomic scope" value="Bacteria"/>
</dbReference>
<dbReference type="HOGENOM" id="CLU_1265787_0_0_14"/>
<dbReference type="InParanoid" id="P47521"/>
<dbReference type="OrthoDB" id="9951964at2"/>
<dbReference type="BioCyc" id="MGEN243273:G1GJ2-337-MONOMER"/>
<dbReference type="Proteomes" id="UP000000807">
    <property type="component" value="Chromosome"/>
</dbReference>
<dbReference type="GO" id="GO:0005886">
    <property type="term" value="C:plasma membrane"/>
    <property type="evidence" value="ECO:0007669"/>
    <property type="project" value="UniProtKB-SubCell"/>
</dbReference>
<dbReference type="InterPro" id="IPR030940">
    <property type="entry name" value="MG279/MG280"/>
</dbReference>
<dbReference type="NCBIfam" id="TIGR04527">
    <property type="entry name" value="mycoplas_twoTM"/>
    <property type="match status" value="1"/>
</dbReference>
<evidence type="ECO:0000255" key="1"/>
<evidence type="ECO:0000305" key="2"/>
<sequence>MIRLLKKLAVFLIILVGILLLGGIATAGYFAFTYREPINNYYKEGYNKISEYNTEIKKISQNIFQNNLVKTLSEVEKSLNEGRKLTQNNSFASGLDSSLNALEGSLKKINNFDSNAAFTQIKHTLNNITSFVDQMLEKFPNPNQNDDFKRYLTEVSQILFYTGISIIGAFFVSGFLLILFTKKVYGVRVSRFNPQRLLKKHLVLLLRDEEVYDAVFGN</sequence>
<gene>
    <name type="ordered locus">MG279</name>
</gene>
<reference key="1">
    <citation type="journal article" date="1995" name="Science">
        <title>The minimal gene complement of Mycoplasma genitalium.</title>
        <authorList>
            <person name="Fraser C.M."/>
            <person name="Gocayne J.D."/>
            <person name="White O."/>
            <person name="Adams M.D."/>
            <person name="Clayton R.A."/>
            <person name="Fleischmann R.D."/>
            <person name="Bult C.J."/>
            <person name="Kerlavage A.R."/>
            <person name="Sutton G.G."/>
            <person name="Kelley J.M."/>
            <person name="Fritchman J.L."/>
            <person name="Weidman J.F."/>
            <person name="Small K.V."/>
            <person name="Sandusky M."/>
            <person name="Fuhrmann J.L."/>
            <person name="Nguyen D.T."/>
            <person name="Utterback T.R."/>
            <person name="Saudek D.M."/>
            <person name="Phillips C.A."/>
            <person name="Merrick J.M."/>
            <person name="Tomb J.-F."/>
            <person name="Dougherty B.A."/>
            <person name="Bott K.F."/>
            <person name="Hu P.-C."/>
            <person name="Lucier T.S."/>
            <person name="Peterson S.N."/>
            <person name="Smith H.O."/>
            <person name="Hutchison C.A. III"/>
            <person name="Venter J.C."/>
        </authorList>
    </citation>
    <scope>NUCLEOTIDE SEQUENCE [LARGE SCALE GENOMIC DNA]</scope>
    <source>
        <strain>ATCC 33530 / DSM 19775 / NCTC 10195 / G37</strain>
    </source>
</reference>
<protein>
    <recommendedName>
        <fullName>Uncharacterized protein MG279</fullName>
    </recommendedName>
</protein>
<keyword id="KW-1003">Cell membrane</keyword>
<keyword id="KW-0472">Membrane</keyword>
<keyword id="KW-1185">Reference proteome</keyword>
<keyword id="KW-0812">Transmembrane</keyword>
<keyword id="KW-1133">Transmembrane helix</keyword>
<organism>
    <name type="scientific">Mycoplasma genitalium (strain ATCC 33530 / DSM 19775 / NCTC 10195 / G37)</name>
    <name type="common">Mycoplasmoides genitalium</name>
    <dbReference type="NCBI Taxonomy" id="243273"/>
    <lineage>
        <taxon>Bacteria</taxon>
        <taxon>Bacillati</taxon>
        <taxon>Mycoplasmatota</taxon>
        <taxon>Mycoplasmoidales</taxon>
        <taxon>Mycoplasmoidaceae</taxon>
        <taxon>Mycoplasmoides</taxon>
    </lineage>
</organism>